<protein>
    <recommendedName>
        <fullName evidence="1">Protein-methionine-sulfoxide reductase catalytic subunit MsrP</fullName>
        <ecNumber evidence="1">1.8.5.-</ecNumber>
    </recommendedName>
</protein>
<reference key="1">
    <citation type="journal article" date="2009" name="J. Bacteriol.">
        <title>Genomic sequencing reveals regulatory mutations and recombinational events in the widely used MC4100 lineage of Escherichia coli K-12.</title>
        <authorList>
            <person name="Ferenci T."/>
            <person name="Zhou Z."/>
            <person name="Betteridge T."/>
            <person name="Ren Y."/>
            <person name="Liu Y."/>
            <person name="Feng L."/>
            <person name="Reeves P.R."/>
            <person name="Wang L."/>
        </authorList>
    </citation>
    <scope>NUCLEOTIDE SEQUENCE [LARGE SCALE GENOMIC DNA]</scope>
    <source>
        <strain>K12 / MC4100 / BW2952</strain>
    </source>
</reference>
<keyword id="KW-0479">Metal-binding</keyword>
<keyword id="KW-0500">Molybdenum</keyword>
<keyword id="KW-0560">Oxidoreductase</keyword>
<keyword id="KW-0574">Periplasm</keyword>
<keyword id="KW-0732">Signal</keyword>
<gene>
    <name evidence="1" type="primary">msrP</name>
    <name type="ordered locus">BWG_1772</name>
</gene>
<sequence length="334" mass="37413">MKKNQFLKESDVTAESVFFMKRRQVLKALGISATALSLPHAAHADLLSWFKGNDRPPAPAGKALEFSKPAAWQNNLPLTPADKVSGYNNFYEFGLDKADPAANAGSLKTDPWTLKISGEVAKPLTLDHDDLTRRFPLEERIYRMRCVEAWSMVVPWIGFPLHKLLALAEPTSNAKYVAFETIYAPEQMPGQQDRFIGGGLKYPYVEGLRLDEAMHPLTLMTVGVYGKALPPQNGAPVRLIVPWKYGFKGIKSIVSIKLTRERPPTTWNLAAPDEYGFYANVNPYVDHPRWSQATERFIGSGGILDVQRQPTLLFNGYADQVASLYRGLDLRENF</sequence>
<proteinExistence type="inferred from homology"/>
<evidence type="ECO:0000255" key="1">
    <source>
        <dbReference type="HAMAP-Rule" id="MF_01206"/>
    </source>
</evidence>
<feature type="signal peptide" description="Tat-type signal" evidence="1">
    <location>
        <begin position="1"/>
        <end position="44"/>
    </location>
</feature>
<feature type="chain" id="PRO_1000213851" description="Protein-methionine-sulfoxide reductase catalytic subunit MsrP" evidence="1">
    <location>
        <begin position="45"/>
        <end position="334"/>
    </location>
</feature>
<feature type="binding site" evidence="1">
    <location>
        <position position="88"/>
    </location>
    <ligand>
        <name>Mo-molybdopterin</name>
        <dbReference type="ChEBI" id="CHEBI:71302"/>
    </ligand>
</feature>
<feature type="binding site" evidence="1">
    <location>
        <begin position="91"/>
        <end position="92"/>
    </location>
    <ligand>
        <name>Mo-molybdopterin</name>
        <dbReference type="ChEBI" id="CHEBI:71302"/>
    </ligand>
</feature>
<feature type="binding site" evidence="1">
    <location>
        <position position="146"/>
    </location>
    <ligand>
        <name>Mo-molybdopterin</name>
        <dbReference type="ChEBI" id="CHEBI:71302"/>
    </ligand>
    <ligandPart>
        <name>Mo</name>
        <dbReference type="ChEBI" id="CHEBI:28685"/>
    </ligandPart>
</feature>
<feature type="binding site" evidence="1">
    <location>
        <position position="181"/>
    </location>
    <ligand>
        <name>Mo-molybdopterin</name>
        <dbReference type="ChEBI" id="CHEBI:71302"/>
    </ligand>
</feature>
<feature type="binding site" evidence="1">
    <location>
        <position position="233"/>
    </location>
    <ligand>
        <name>Mo-molybdopterin</name>
        <dbReference type="ChEBI" id="CHEBI:71302"/>
    </ligand>
</feature>
<feature type="binding site" evidence="1">
    <location>
        <position position="238"/>
    </location>
    <ligand>
        <name>Mo-molybdopterin</name>
        <dbReference type="ChEBI" id="CHEBI:71302"/>
    </ligand>
</feature>
<feature type="binding site" evidence="1">
    <location>
        <begin position="249"/>
        <end position="251"/>
    </location>
    <ligand>
        <name>Mo-molybdopterin</name>
        <dbReference type="ChEBI" id="CHEBI:71302"/>
    </ligand>
</feature>
<comment type="function">
    <text evidence="1">Part of the MsrPQ system that repairs oxidized periplasmic proteins containing methionine sulfoxide residues (Met-O), using respiratory chain electrons. Thus protects these proteins from oxidative-stress damage caused by reactive species of oxygen and chlorine generated by the host defense mechanisms. MsrPQ is essential for the maintenance of envelope integrity under bleach stress, rescuing a wide series of structurally unrelated periplasmic proteins from methionine oxidation, including the primary periplasmic chaperone SurA and the lipoprotein Pal. The catalytic subunit MsrP is non-stereospecific, being able to reduce both (R-) and (S-) diastereoisomers of methionine sulfoxide.</text>
</comment>
<comment type="catalytic activity">
    <reaction evidence="1">
        <text>L-methionyl-[protein] + a quinone + H2O = L-methionyl-(S)-S-oxide-[protein] + a quinol</text>
        <dbReference type="Rhea" id="RHEA:51292"/>
        <dbReference type="Rhea" id="RHEA-COMP:12313"/>
        <dbReference type="Rhea" id="RHEA-COMP:12315"/>
        <dbReference type="ChEBI" id="CHEBI:15377"/>
        <dbReference type="ChEBI" id="CHEBI:16044"/>
        <dbReference type="ChEBI" id="CHEBI:24646"/>
        <dbReference type="ChEBI" id="CHEBI:44120"/>
        <dbReference type="ChEBI" id="CHEBI:132124"/>
    </reaction>
</comment>
<comment type="catalytic activity">
    <reaction evidence="1">
        <text>L-methionyl-[protein] + a quinone + H2O = L-methionyl-(R)-S-oxide-[protein] + a quinol</text>
        <dbReference type="Rhea" id="RHEA:51296"/>
        <dbReference type="Rhea" id="RHEA-COMP:12313"/>
        <dbReference type="Rhea" id="RHEA-COMP:12314"/>
        <dbReference type="ChEBI" id="CHEBI:15377"/>
        <dbReference type="ChEBI" id="CHEBI:16044"/>
        <dbReference type="ChEBI" id="CHEBI:24646"/>
        <dbReference type="ChEBI" id="CHEBI:45764"/>
        <dbReference type="ChEBI" id="CHEBI:132124"/>
    </reaction>
</comment>
<comment type="cofactor">
    <cofactor evidence="1">
        <name>Mo-molybdopterin</name>
        <dbReference type="ChEBI" id="CHEBI:71302"/>
    </cofactor>
    <text evidence="1">Binds 1 Mo-molybdopterin (Mo-MPT) cofactor per subunit.</text>
</comment>
<comment type="subunit">
    <text evidence="1">Heterodimer of a catalytic subunit (MsrP) and a heme-binding subunit (MsrQ).</text>
</comment>
<comment type="subcellular location">
    <subcellularLocation>
        <location evidence="1">Periplasm</location>
    </subcellularLocation>
    <text evidence="1">Is attached to the inner membrane when interacting with the MsrQ subunit.</text>
</comment>
<comment type="PTM">
    <text evidence="1">Predicted to be exported by the Tat system. The position of the signal peptide cleavage has not been experimentally proven.</text>
</comment>
<comment type="similarity">
    <text evidence="1">Belongs to the MsrP family.</text>
</comment>
<accession>C4ZQP1</accession>
<dbReference type="EC" id="1.8.5.-" evidence="1"/>
<dbReference type="EMBL" id="CP001396">
    <property type="protein sequence ID" value="ACR65065.1"/>
    <property type="molecule type" value="Genomic_DNA"/>
</dbReference>
<dbReference type="RefSeq" id="WP_000740107.1">
    <property type="nucleotide sequence ID" value="NC_012759.1"/>
</dbReference>
<dbReference type="SMR" id="C4ZQP1"/>
<dbReference type="KEGG" id="ebw:BWG_1772"/>
<dbReference type="HOGENOM" id="CLU_045520_0_0_6"/>
<dbReference type="GO" id="GO:0042597">
    <property type="term" value="C:periplasmic space"/>
    <property type="evidence" value="ECO:0007669"/>
    <property type="project" value="UniProtKB-SubCell"/>
</dbReference>
<dbReference type="GO" id="GO:0046872">
    <property type="term" value="F:metal ion binding"/>
    <property type="evidence" value="ECO:0007669"/>
    <property type="project" value="UniProtKB-KW"/>
</dbReference>
<dbReference type="GO" id="GO:0043546">
    <property type="term" value="F:molybdopterin cofactor binding"/>
    <property type="evidence" value="ECO:0007669"/>
    <property type="project" value="UniProtKB-UniRule"/>
</dbReference>
<dbReference type="GO" id="GO:0016672">
    <property type="term" value="F:oxidoreductase activity, acting on a sulfur group of donors, quinone or similar compound as acceptor"/>
    <property type="evidence" value="ECO:0007669"/>
    <property type="project" value="UniProtKB-UniRule"/>
</dbReference>
<dbReference type="GO" id="GO:0030091">
    <property type="term" value="P:protein repair"/>
    <property type="evidence" value="ECO:0007669"/>
    <property type="project" value="UniProtKB-UniRule"/>
</dbReference>
<dbReference type="CDD" id="cd02107">
    <property type="entry name" value="YedY_like_Moco"/>
    <property type="match status" value="1"/>
</dbReference>
<dbReference type="FunFam" id="3.90.420.10:FF:000001">
    <property type="entry name" value="Protein-methionine-sulfoxide reductase catalytic subunit MsrP"/>
    <property type="match status" value="1"/>
</dbReference>
<dbReference type="Gene3D" id="3.90.420.10">
    <property type="entry name" value="Oxidoreductase, molybdopterin-binding domain"/>
    <property type="match status" value="1"/>
</dbReference>
<dbReference type="HAMAP" id="MF_01206">
    <property type="entry name" value="MsrP"/>
    <property type="match status" value="1"/>
</dbReference>
<dbReference type="InterPro" id="IPR022867">
    <property type="entry name" value="MsrP"/>
</dbReference>
<dbReference type="InterPro" id="IPR000572">
    <property type="entry name" value="OxRdtase_Mopterin-bd_dom"/>
</dbReference>
<dbReference type="InterPro" id="IPR036374">
    <property type="entry name" value="OxRdtase_Mopterin-bd_sf"/>
</dbReference>
<dbReference type="InterPro" id="IPR006311">
    <property type="entry name" value="TAT_signal"/>
</dbReference>
<dbReference type="NCBIfam" id="NF003767">
    <property type="entry name" value="PRK05363.1"/>
    <property type="match status" value="1"/>
</dbReference>
<dbReference type="PANTHER" id="PTHR43032">
    <property type="entry name" value="PROTEIN-METHIONINE-SULFOXIDE REDUCTASE"/>
    <property type="match status" value="1"/>
</dbReference>
<dbReference type="PANTHER" id="PTHR43032:SF3">
    <property type="entry name" value="PROTEIN-METHIONINE-SULFOXIDE REDUCTASE CATALYTIC SUBUNIT MSRP"/>
    <property type="match status" value="1"/>
</dbReference>
<dbReference type="Pfam" id="PF00174">
    <property type="entry name" value="Oxidored_molyb"/>
    <property type="match status" value="1"/>
</dbReference>
<dbReference type="SUPFAM" id="SSF56524">
    <property type="entry name" value="Oxidoreductase molybdopterin-binding domain"/>
    <property type="match status" value="1"/>
</dbReference>
<dbReference type="PROSITE" id="PS51318">
    <property type="entry name" value="TAT"/>
    <property type="match status" value="1"/>
</dbReference>
<organism>
    <name type="scientific">Escherichia coli (strain K12 / MC4100 / BW2952)</name>
    <dbReference type="NCBI Taxonomy" id="595496"/>
    <lineage>
        <taxon>Bacteria</taxon>
        <taxon>Pseudomonadati</taxon>
        <taxon>Pseudomonadota</taxon>
        <taxon>Gammaproteobacteria</taxon>
        <taxon>Enterobacterales</taxon>
        <taxon>Enterobacteriaceae</taxon>
        <taxon>Escherichia</taxon>
    </lineage>
</organism>
<name>MSRP_ECOBW</name>